<sequence length="393" mass="45707">MPHFLAKLDFKPLKYPLIEGDFCFHKEFLSLKNPTKSCVYASFKDRIFLLQKIRRANDFLIKSEKTTPLKREILKQALRIYSQSFEVISHNLQENSKHASGKKALDLGTFEDFIQKNQAPILAEIGFGSGRHLIELAKNNPTKTCLGIEIHTPSIAQALKQIELLDLKNLHILQGDGRLILESMPNYKCEKIFVHFPVPWNEKKHRRVLSEKFLNEALRVLKPRGFLELRTDDGLYFEDSLKLALKNFQCEIEIKKNAQIPVISKYEARWNKLKKDIYDLRIYSLELNETPFYNHAFDFSFDTITMSEKSVGTILKTKKIIQEGYFVHVCNIYENKGDFLVELSMGDFDWPVRLFVLLTENQIFYLNKSPLKTLNNHKAHLLLQNILSQKGIG</sequence>
<evidence type="ECO:0000255" key="1">
    <source>
        <dbReference type="HAMAP-Rule" id="MF_01057"/>
    </source>
</evidence>
<dbReference type="EC" id="2.1.1.33" evidence="1"/>
<dbReference type="EMBL" id="CP000241">
    <property type="protein sequence ID" value="ABF84799.1"/>
    <property type="molecule type" value="Genomic_DNA"/>
</dbReference>
<dbReference type="RefSeq" id="WP_001119911.1">
    <property type="nucleotide sequence ID" value="NC_008086.1"/>
</dbReference>
<dbReference type="SMR" id="Q1CTC3"/>
<dbReference type="KEGG" id="hpa:HPAG1_0732"/>
<dbReference type="HOGENOM" id="CLU_041532_0_0_7"/>
<dbReference type="UniPathway" id="UPA00989"/>
<dbReference type="GO" id="GO:0043527">
    <property type="term" value="C:tRNA methyltransferase complex"/>
    <property type="evidence" value="ECO:0007669"/>
    <property type="project" value="TreeGrafter"/>
</dbReference>
<dbReference type="GO" id="GO:0008176">
    <property type="term" value="F:tRNA (guanine(46)-N7)-methyltransferase activity"/>
    <property type="evidence" value="ECO:0007669"/>
    <property type="project" value="UniProtKB-UniRule"/>
</dbReference>
<dbReference type="CDD" id="cd02440">
    <property type="entry name" value="AdoMet_MTases"/>
    <property type="match status" value="1"/>
</dbReference>
<dbReference type="FunFam" id="3.40.50.150:FF:000506">
    <property type="entry name" value="tRNA (guanine-N(7)-)-methyltransferase"/>
    <property type="match status" value="1"/>
</dbReference>
<dbReference type="Gene3D" id="3.40.50.150">
    <property type="entry name" value="Vaccinia Virus protein VP39"/>
    <property type="match status" value="1"/>
</dbReference>
<dbReference type="HAMAP" id="MF_01057">
    <property type="entry name" value="tRNA_methyltr_TrmB"/>
    <property type="match status" value="1"/>
</dbReference>
<dbReference type="InterPro" id="IPR029063">
    <property type="entry name" value="SAM-dependent_MTases_sf"/>
</dbReference>
<dbReference type="InterPro" id="IPR003358">
    <property type="entry name" value="tRNA_(Gua-N-7)_MeTrfase_Trmb"/>
</dbReference>
<dbReference type="InterPro" id="IPR055361">
    <property type="entry name" value="tRNA_methyltr_TrmB_bact"/>
</dbReference>
<dbReference type="NCBIfam" id="NF010719">
    <property type="entry name" value="PRK14121.1"/>
    <property type="match status" value="1"/>
</dbReference>
<dbReference type="NCBIfam" id="TIGR00091">
    <property type="entry name" value="tRNA (guanosine(46)-N7)-methyltransferase TrmB"/>
    <property type="match status" value="1"/>
</dbReference>
<dbReference type="PANTHER" id="PTHR23417">
    <property type="entry name" value="3-DEOXY-D-MANNO-OCTULOSONIC-ACID TRANSFERASE/TRNA GUANINE-N 7 - -METHYLTRANSFERASE"/>
    <property type="match status" value="1"/>
</dbReference>
<dbReference type="PANTHER" id="PTHR23417:SF14">
    <property type="entry name" value="PENTACOTRIPEPTIDE-REPEAT REGION OF PRORP DOMAIN-CONTAINING PROTEIN"/>
    <property type="match status" value="1"/>
</dbReference>
<dbReference type="Pfam" id="PF02390">
    <property type="entry name" value="Methyltransf_4"/>
    <property type="match status" value="1"/>
</dbReference>
<dbReference type="SUPFAM" id="SSF53335">
    <property type="entry name" value="S-adenosyl-L-methionine-dependent methyltransferases"/>
    <property type="match status" value="1"/>
</dbReference>
<dbReference type="PROSITE" id="PS51625">
    <property type="entry name" value="SAM_MT_TRMB"/>
    <property type="match status" value="1"/>
</dbReference>
<proteinExistence type="inferred from homology"/>
<protein>
    <recommendedName>
        <fullName evidence="1">tRNA (guanine-N(7)-)-methyltransferase</fullName>
        <ecNumber evidence="1">2.1.1.33</ecNumber>
    </recommendedName>
    <alternativeName>
        <fullName evidence="1">tRNA (guanine(46)-N(7))-methyltransferase</fullName>
    </alternativeName>
    <alternativeName>
        <fullName evidence="1">tRNA(m7G46)-methyltransferase</fullName>
    </alternativeName>
</protein>
<organism>
    <name type="scientific">Helicobacter pylori (strain HPAG1)</name>
    <dbReference type="NCBI Taxonomy" id="357544"/>
    <lineage>
        <taxon>Bacteria</taxon>
        <taxon>Pseudomonadati</taxon>
        <taxon>Campylobacterota</taxon>
        <taxon>Epsilonproteobacteria</taxon>
        <taxon>Campylobacterales</taxon>
        <taxon>Helicobacteraceae</taxon>
        <taxon>Helicobacter</taxon>
    </lineage>
</organism>
<comment type="function">
    <text evidence="1">Catalyzes the formation of N(7)-methylguanine at position 46 (m7G46) in tRNA.</text>
</comment>
<comment type="catalytic activity">
    <reaction evidence="1">
        <text>guanosine(46) in tRNA + S-adenosyl-L-methionine = N(7)-methylguanosine(46) in tRNA + S-adenosyl-L-homocysteine</text>
        <dbReference type="Rhea" id="RHEA:42708"/>
        <dbReference type="Rhea" id="RHEA-COMP:10188"/>
        <dbReference type="Rhea" id="RHEA-COMP:10189"/>
        <dbReference type="ChEBI" id="CHEBI:57856"/>
        <dbReference type="ChEBI" id="CHEBI:59789"/>
        <dbReference type="ChEBI" id="CHEBI:74269"/>
        <dbReference type="ChEBI" id="CHEBI:74480"/>
        <dbReference type="EC" id="2.1.1.33"/>
    </reaction>
</comment>
<comment type="pathway">
    <text evidence="1">tRNA modification; N(7)-methylguanine-tRNA biosynthesis.</text>
</comment>
<comment type="similarity">
    <text evidence="1">Belongs to the class I-like SAM-binding methyltransferase superfamily. TrmB family.</text>
</comment>
<feature type="chain" id="PRO_0000288158" description="tRNA (guanine-N(7)-)-methyltransferase">
    <location>
        <begin position="1"/>
        <end position="393"/>
    </location>
</feature>
<feature type="binding site" evidence="1">
    <location>
        <position position="124"/>
    </location>
    <ligand>
        <name>S-adenosyl-L-methionine</name>
        <dbReference type="ChEBI" id="CHEBI:59789"/>
    </ligand>
</feature>
<feature type="binding site" evidence="1">
    <location>
        <position position="149"/>
    </location>
    <ligand>
        <name>S-adenosyl-L-methionine</name>
        <dbReference type="ChEBI" id="CHEBI:59789"/>
    </ligand>
</feature>
<feature type="binding site" evidence="1">
    <location>
        <position position="176"/>
    </location>
    <ligand>
        <name>S-adenosyl-L-methionine</name>
        <dbReference type="ChEBI" id="CHEBI:59789"/>
    </ligand>
</feature>
<feature type="binding site" evidence="1">
    <location>
        <position position="232"/>
    </location>
    <ligand>
        <name>substrate</name>
    </ligand>
</feature>
<reference key="1">
    <citation type="journal article" date="2006" name="Proc. Natl. Acad. Sci. U.S.A.">
        <title>The complete genome sequence of a chronic atrophic gastritis Helicobacter pylori strain: evolution during disease progression.</title>
        <authorList>
            <person name="Oh J.D."/>
            <person name="Kling-Baeckhed H."/>
            <person name="Giannakis M."/>
            <person name="Xu J."/>
            <person name="Fulton R.S."/>
            <person name="Fulton L.A."/>
            <person name="Cordum H.S."/>
            <person name="Wang C."/>
            <person name="Elliott G."/>
            <person name="Edwards J."/>
            <person name="Mardis E.R."/>
            <person name="Engstrand L.G."/>
            <person name="Gordon J.I."/>
        </authorList>
    </citation>
    <scope>NUCLEOTIDE SEQUENCE [LARGE SCALE GENOMIC DNA]</scope>
    <source>
        <strain>HPAG1</strain>
    </source>
</reference>
<name>TRMB_HELPH</name>
<accession>Q1CTC3</accession>
<keyword id="KW-0489">Methyltransferase</keyword>
<keyword id="KW-0949">S-adenosyl-L-methionine</keyword>
<keyword id="KW-0808">Transferase</keyword>
<keyword id="KW-0819">tRNA processing</keyword>
<gene>
    <name evidence="1" type="primary">trmB</name>
    <name type="ordered locus">HPAG1_0732</name>
</gene>